<sequence length="250" mass="28103">MTALLSPDQLEADLRAIGARLYHDQHPFHALLHHGKLDRGQVQAWALNRFEYQRCIPLKDAAILARMEDPALRRIWRQRILDHDGNSASDGGIARWLHLTDALGLDRTLVESGRALLPGTRFAVQAYLHFVREKSLLEAIASSLTELFAPNIIGQRVAGMLKHYDFVSSEALAYFEHRLTEAPRDSDFALDYVKQHADTVEKQALVKAALHFKCSVLWAQLDALHVAYVTPGIVWPDAFVPDRDASRVAA</sequence>
<feature type="chain" id="PRO_1000061680" description="Pyrroloquinoline-quinone synthase">
    <location>
        <begin position="1"/>
        <end position="250"/>
    </location>
</feature>
<evidence type="ECO:0000255" key="1">
    <source>
        <dbReference type="HAMAP-Rule" id="MF_00654"/>
    </source>
</evidence>
<proteinExistence type="inferred from homology"/>
<gene>
    <name evidence="1" type="primary">pqqC</name>
    <name type="ordered locus">XCV3246</name>
</gene>
<keyword id="KW-0560">Oxidoreductase</keyword>
<keyword id="KW-0884">PQQ biosynthesis</keyword>
<accession>Q3BQI6</accession>
<comment type="function">
    <text evidence="1">Ring cyclization and eight-electron oxidation of 3a-(2-amino-2-carboxyethyl)-4,5-dioxo-4,5,6,7,8,9-hexahydroquinoline-7,9-dicarboxylic-acid to PQQ.</text>
</comment>
<comment type="catalytic activity">
    <reaction evidence="1">
        <text>6-(2-amino-2-carboxyethyl)-7,8-dioxo-1,2,3,4,7,8-hexahydroquinoline-2,4-dicarboxylate + 3 O2 = pyrroloquinoline quinone + 2 H2O2 + 2 H2O + H(+)</text>
        <dbReference type="Rhea" id="RHEA:10692"/>
        <dbReference type="ChEBI" id="CHEBI:15377"/>
        <dbReference type="ChEBI" id="CHEBI:15378"/>
        <dbReference type="ChEBI" id="CHEBI:15379"/>
        <dbReference type="ChEBI" id="CHEBI:16240"/>
        <dbReference type="ChEBI" id="CHEBI:58442"/>
        <dbReference type="ChEBI" id="CHEBI:58778"/>
        <dbReference type="EC" id="1.3.3.11"/>
    </reaction>
</comment>
<comment type="pathway">
    <text evidence="1">Cofactor biosynthesis; pyrroloquinoline quinone biosynthesis.</text>
</comment>
<comment type="similarity">
    <text evidence="1">Belongs to the PqqC family.</text>
</comment>
<name>PQQC_XANE5</name>
<protein>
    <recommendedName>
        <fullName evidence="1">Pyrroloquinoline-quinone synthase</fullName>
        <ecNumber evidence="1">1.3.3.11</ecNumber>
    </recommendedName>
    <alternativeName>
        <fullName evidence="1">Coenzyme PQQ synthesis protein C</fullName>
    </alternativeName>
    <alternativeName>
        <fullName evidence="1">Pyrroloquinoline quinone biosynthesis protein C</fullName>
    </alternativeName>
</protein>
<reference key="1">
    <citation type="journal article" date="2005" name="J. Bacteriol.">
        <title>Insights into genome plasticity and pathogenicity of the plant pathogenic Bacterium Xanthomonas campestris pv. vesicatoria revealed by the complete genome sequence.</title>
        <authorList>
            <person name="Thieme F."/>
            <person name="Koebnik R."/>
            <person name="Bekel T."/>
            <person name="Berger C."/>
            <person name="Boch J."/>
            <person name="Buettner D."/>
            <person name="Caldana C."/>
            <person name="Gaigalat L."/>
            <person name="Goesmann A."/>
            <person name="Kay S."/>
            <person name="Kirchner O."/>
            <person name="Lanz C."/>
            <person name="Linke B."/>
            <person name="McHardy A.C."/>
            <person name="Meyer F."/>
            <person name="Mittenhuber G."/>
            <person name="Nies D.H."/>
            <person name="Niesbach-Kloesgen U."/>
            <person name="Patschkowski T."/>
            <person name="Rueckert C."/>
            <person name="Rupp O."/>
            <person name="Schneiker S."/>
            <person name="Schuster S.C."/>
            <person name="Vorhoelter F.J."/>
            <person name="Weber E."/>
            <person name="Puehler A."/>
            <person name="Bonas U."/>
            <person name="Bartels D."/>
            <person name="Kaiser O."/>
        </authorList>
    </citation>
    <scope>NUCLEOTIDE SEQUENCE [LARGE SCALE GENOMIC DNA]</scope>
    <source>
        <strain>85-10</strain>
    </source>
</reference>
<organism>
    <name type="scientific">Xanthomonas euvesicatoria pv. vesicatoria (strain 85-10)</name>
    <name type="common">Xanthomonas campestris pv. vesicatoria</name>
    <dbReference type="NCBI Taxonomy" id="316273"/>
    <lineage>
        <taxon>Bacteria</taxon>
        <taxon>Pseudomonadati</taxon>
        <taxon>Pseudomonadota</taxon>
        <taxon>Gammaproteobacteria</taxon>
        <taxon>Lysobacterales</taxon>
        <taxon>Lysobacteraceae</taxon>
        <taxon>Xanthomonas</taxon>
    </lineage>
</organism>
<dbReference type="EC" id="1.3.3.11" evidence="1"/>
<dbReference type="EMBL" id="AM039952">
    <property type="protein sequence ID" value="CAJ24977.1"/>
    <property type="molecule type" value="Genomic_DNA"/>
</dbReference>
<dbReference type="RefSeq" id="WP_007967171.1">
    <property type="nucleotide sequence ID" value="NZ_CP017190.1"/>
</dbReference>
<dbReference type="SMR" id="Q3BQI6"/>
<dbReference type="STRING" id="456327.BJD11_06550"/>
<dbReference type="GeneID" id="63992253"/>
<dbReference type="KEGG" id="xcv:XCV3246"/>
<dbReference type="eggNOG" id="COG5424">
    <property type="taxonomic scope" value="Bacteria"/>
</dbReference>
<dbReference type="HOGENOM" id="CLU_080136_0_0_6"/>
<dbReference type="UniPathway" id="UPA00539"/>
<dbReference type="Proteomes" id="UP000007069">
    <property type="component" value="Chromosome"/>
</dbReference>
<dbReference type="GO" id="GO:0033732">
    <property type="term" value="F:pyrroloquinoline-quinone synthase activity"/>
    <property type="evidence" value="ECO:0007669"/>
    <property type="project" value="UniProtKB-EC"/>
</dbReference>
<dbReference type="GO" id="GO:0018189">
    <property type="term" value="P:pyrroloquinoline quinone biosynthetic process"/>
    <property type="evidence" value="ECO:0007669"/>
    <property type="project" value="UniProtKB-UniRule"/>
</dbReference>
<dbReference type="GO" id="GO:0006790">
    <property type="term" value="P:sulfur compound metabolic process"/>
    <property type="evidence" value="ECO:0007669"/>
    <property type="project" value="UniProtKB-ARBA"/>
</dbReference>
<dbReference type="Gene3D" id="1.20.910.10">
    <property type="entry name" value="Heme oxygenase-like"/>
    <property type="match status" value="1"/>
</dbReference>
<dbReference type="HAMAP" id="MF_00654">
    <property type="entry name" value="PQQ_syn_PqqC"/>
    <property type="match status" value="1"/>
</dbReference>
<dbReference type="InterPro" id="IPR016084">
    <property type="entry name" value="Haem_Oase-like_multi-hlx"/>
</dbReference>
<dbReference type="InterPro" id="IPR011845">
    <property type="entry name" value="PqqC"/>
</dbReference>
<dbReference type="InterPro" id="IPR039068">
    <property type="entry name" value="PqqC-like"/>
</dbReference>
<dbReference type="InterPro" id="IPR004305">
    <property type="entry name" value="Thiaminase-2/PQQC"/>
</dbReference>
<dbReference type="NCBIfam" id="TIGR02111">
    <property type="entry name" value="PQQ_syn_pqqC"/>
    <property type="match status" value="1"/>
</dbReference>
<dbReference type="PANTHER" id="PTHR40279:SF3">
    <property type="entry name" value="4-AMINOBENZOATE SYNTHASE"/>
    <property type="match status" value="1"/>
</dbReference>
<dbReference type="PANTHER" id="PTHR40279">
    <property type="entry name" value="PQQC-LIKE PROTEIN"/>
    <property type="match status" value="1"/>
</dbReference>
<dbReference type="Pfam" id="PF03070">
    <property type="entry name" value="TENA_THI-4"/>
    <property type="match status" value="1"/>
</dbReference>
<dbReference type="SUPFAM" id="SSF48613">
    <property type="entry name" value="Heme oxygenase-like"/>
    <property type="match status" value="1"/>
</dbReference>